<sequence length="284" mass="33252">MPDYTWFEGIPFPAFGIPKETLQNVCNKFVVKEEDLILLTYPKSGTNWLIEIVCLIQTKGDPKWIQSVTIWDRSPWIETDLGYDMLIKKKGPRLITSHLPMHLFSKSLFSSKAKVIYLIRNPRDVLVSGYYFWGKTTLAKKPDSLGTYVEWFLKGYVPYGSWFEHIRAWLSMRELDNFLLLYYEDMKKDTMGTIKKICDFLGKKLEPDELDLVLKYSSFQVMKENNMSNYNLMEKELILPGFTFMRNGTTGDWKNHFTVAQAEAFDKVFQEKMAGFPPGMFPWD</sequence>
<name>ST2A6_RAT</name>
<protein>
    <recommendedName>
        <fullName evidence="11">Sulfotransferase 2A6</fullName>
        <shortName>ST2A6</shortName>
        <ecNumber evidence="4">2.8.2.2</ecNumber>
    </recommendedName>
    <alternativeName>
        <fullName evidence="10">Androsterone-sulfating sulfotransferase</fullName>
        <shortName evidence="10">AD-ST</shortName>
    </alternativeName>
    <alternativeName>
        <fullName evidence="8">Bile acid:3'phosphoadenosine-5'phosphosulfate:sulfotransferase I</fullName>
        <shortName evidence="8">BAST I</shortName>
        <ecNumber evidence="4">2.8.2.14</ecNumber>
    </alternativeName>
    <alternativeName>
        <fullName evidence="7">Hydroxysteroid sulfotransferase A</fullName>
        <shortName evidence="7 9">STa</shortName>
    </alternativeName>
    <alternativeName>
        <fullName evidence="9">ST-40</fullName>
    </alternativeName>
    <alternativeName>
        <fullName evidence="9">ST-41</fullName>
    </alternativeName>
    <alternativeName>
        <fullName evidence="6">Senescence marker protein 2A</fullName>
    </alternativeName>
</protein>
<evidence type="ECO:0000250" key="1">
    <source>
        <dbReference type="UniProtKB" id="Q06520"/>
    </source>
</evidence>
<evidence type="ECO:0000269" key="2">
    <source>
    </source>
</evidence>
<evidence type="ECO:0000269" key="3">
    <source>
    </source>
</evidence>
<evidence type="ECO:0000269" key="4">
    <source>
    </source>
</evidence>
<evidence type="ECO:0000269" key="5">
    <source>
    </source>
</evidence>
<evidence type="ECO:0000303" key="6">
    <source>
    </source>
</evidence>
<evidence type="ECO:0000303" key="7">
    <source>
    </source>
</evidence>
<evidence type="ECO:0000303" key="8">
    <source>
    </source>
</evidence>
<evidence type="ECO:0000303" key="9">
    <source>
    </source>
</evidence>
<evidence type="ECO:0000303" key="10">
    <source>
    </source>
</evidence>
<evidence type="ECO:0000305" key="11"/>
<evidence type="ECO:0000305" key="12">
    <source>
    </source>
</evidence>
<evidence type="ECO:0000312" key="13">
    <source>
        <dbReference type="RGD" id="3727"/>
    </source>
</evidence>
<proteinExistence type="evidence at protein level"/>
<organism>
    <name type="scientific">Rattus norvegicus</name>
    <name type="common">Rat</name>
    <dbReference type="NCBI Taxonomy" id="10116"/>
    <lineage>
        <taxon>Eukaryota</taxon>
        <taxon>Metazoa</taxon>
        <taxon>Chordata</taxon>
        <taxon>Craniata</taxon>
        <taxon>Vertebrata</taxon>
        <taxon>Euteleostomi</taxon>
        <taxon>Mammalia</taxon>
        <taxon>Eutheria</taxon>
        <taxon>Euarchontoglires</taxon>
        <taxon>Glires</taxon>
        <taxon>Rodentia</taxon>
        <taxon>Myomorpha</taxon>
        <taxon>Muroidea</taxon>
        <taxon>Muridae</taxon>
        <taxon>Murinae</taxon>
        <taxon>Rattus</taxon>
    </lineage>
</organism>
<accession>P22789</accession>
<accession>Q63551</accession>
<feature type="initiator methionine" description="Removed" evidence="2 4 5">
    <location>
        <position position="1"/>
    </location>
</feature>
<feature type="chain" id="PRO_0000085143" description="Sulfotransferase 2A6">
    <location>
        <begin position="2"/>
        <end position="284"/>
    </location>
</feature>
<feature type="active site" description="Proton acceptor" evidence="1">
    <location>
        <position position="98"/>
    </location>
</feature>
<feature type="binding site" evidence="1">
    <location>
        <begin position="43"/>
        <end position="48"/>
    </location>
    <ligand>
        <name>3'-phosphoadenylyl sulfate</name>
        <dbReference type="ChEBI" id="CHEBI:58339"/>
    </ligand>
</feature>
<feature type="binding site" evidence="1">
    <location>
        <position position="120"/>
    </location>
    <ligand>
        <name>3'-phosphoadenylyl sulfate</name>
        <dbReference type="ChEBI" id="CHEBI:58339"/>
    </ligand>
</feature>
<feature type="binding site" evidence="1">
    <location>
        <position position="128"/>
    </location>
    <ligand>
        <name>3'-phosphoadenylyl sulfate</name>
        <dbReference type="ChEBI" id="CHEBI:58339"/>
    </ligand>
</feature>
<feature type="binding site" evidence="1">
    <location>
        <position position="183"/>
    </location>
    <ligand>
        <name>3'-phosphoadenylyl sulfate</name>
        <dbReference type="ChEBI" id="CHEBI:58339"/>
    </ligand>
</feature>
<feature type="binding site" evidence="1">
    <location>
        <begin position="217"/>
        <end position="222"/>
    </location>
    <ligand>
        <name>3'-phosphoadenylyl sulfate</name>
        <dbReference type="ChEBI" id="CHEBI:58339"/>
    </ligand>
</feature>
<feature type="binding site" evidence="1">
    <location>
        <begin position="246"/>
        <end position="248"/>
    </location>
    <ligand>
        <name>3'-phosphoadenylyl sulfate</name>
        <dbReference type="ChEBI" id="CHEBI:58339"/>
    </ligand>
</feature>
<feature type="sequence conflict" description="In Ref. 4; AA sequence." evidence="11" ref="4">
    <original>P</original>
    <variation>S</variation>
    <location>
        <position position="18"/>
    </location>
</feature>
<feature type="sequence conflict" description="In Ref. 4; AA sequence." evidence="11" ref="4">
    <original>NVCNKFVVKE</original>
    <variation>DVNKSVKD</variation>
    <location>
        <begin position="24"/>
        <end position="33"/>
    </location>
</feature>
<feature type="sequence conflict" description="In Ref. 2; CAA45007." evidence="11" ref="2">
    <original>Y</original>
    <variation>N</variation>
    <location>
        <position position="156"/>
    </location>
</feature>
<reference key="1">
    <citation type="journal article" date="1990" name="Biochem. Biophys. Res. Commun.">
        <title>cDNA cloning of the hydroxysteroid sulfotransferase STa sharing a strong homology in amino acid sequence with the senescence marker protein SMP-2 in rat livers.</title>
        <authorList>
            <person name="Ogura K."/>
            <person name="Kajita J."/>
            <person name="Narihata H."/>
            <person name="Watabe T."/>
            <person name="Ozawa S."/>
            <person name="Nagata K."/>
            <person name="Yamazoe Y."/>
            <person name="Kato R."/>
        </authorList>
    </citation>
    <scope>NUCLEOTIDE SEQUENCE [MRNA]</scope>
    <scope>PROTEIN SEQUENCE OF 174-184 AND 234-239</scope>
    <source>
        <strain>Sprague-Dawley</strain>
        <tissue>Liver</tissue>
    </source>
</reference>
<reference key="2">
    <citation type="journal article" date="1994" name="Chem. Biol. Interact.">
        <title>Major hydroxysteroid sulfotransferase STa in rat liver cytosol may consist of two microheterogeneous subunits.</title>
        <authorList>
            <person name="Ogura K."/>
            <person name="Satsukawa M."/>
            <person name="Okuda H."/>
            <person name="Hiratsuka A."/>
            <person name="Watabe T."/>
        </authorList>
    </citation>
    <scope>NUCLEOTIDE SEQUENCE [MRNA]</scope>
    <scope>FUNCTION</scope>
    <scope>CATALYTIC ACTIVITY</scope>
    <source>
        <strain>Sprague-Dawley</strain>
        <tissue>Liver</tissue>
    </source>
</reference>
<reference key="3">
    <citation type="journal article" date="1990" name="Biochemistry">
        <title>Structure and regulation of the senescence marker protein 2 gene promoter.</title>
        <authorList>
            <person name="Song C.S."/>
            <person name="Kim J.M."/>
            <person name="Roy A.K."/>
            <person name="Chatterjee B."/>
        </authorList>
    </citation>
    <scope>NUCLEOTIDE SEQUENCE [GENOMIC DNA] OF 1-115</scope>
</reference>
<reference key="4">
    <citation type="journal article" date="1989" name="J. Lipid Res.">
        <title>Bile acid sulfotransferase I from rat liver sulfates bile acids and 3-hydroxy steroids: purification, N-terminal amino acid sequence, and kinetic properties.</title>
        <authorList>
            <person name="Barnes S."/>
            <person name="Buchina E.S."/>
            <person name="King R.J."/>
            <person name="McBurnett T."/>
            <person name="Taylor K.B."/>
        </authorList>
    </citation>
    <scope>PROTEIN SEQUENCE OF 2-37</scope>
    <scope>IDENTIFICATION BY MASS SPECTROMETRY</scope>
    <scope>FUNCTION</scope>
    <scope>CATALYTIC ACTIVITY</scope>
    <scope>BIOPHYSICOCHEMICAL PROPERTIES</scope>
    <scope>SUBCELLULAR LOCATION</scope>
</reference>
<reference key="5">
    <citation type="journal article" date="1993" name="Biochem. J.">
        <title>Developmental changes in the isoelectric variants of rat hepatic hydroxysteroid sulphotransferase.</title>
        <authorList>
            <person name="Takahashi M."/>
            <person name="Homma H."/>
            <person name="Matsui M."/>
        </authorList>
    </citation>
    <scope>PROTEIN SEQUENCE OF 2-46</scope>
    <scope>SUBUNIT</scope>
    <scope>DEVELOPMENTAL STAGE</scope>
    <scope>TISSUE SPECIFICITY</scope>
    <scope>INDUCTION</scope>
    <source>
        <strain>Wistar</strain>
        <tissue>Liver</tissue>
    </source>
</reference>
<reference key="6">
    <citation type="journal article" date="1990" name="Mol. Pharmacol.">
        <title>Rat liver cytosolic hydroxysteroid sulfotransferase (sulfotransferase a) catalyzing the formation of reactive sulfate esters from carcinogenic polycyclic hydroxymethylarenes.</title>
        <authorList>
            <person name="Ogura K."/>
            <person name="Sohtome T."/>
            <person name="Sugiyama A."/>
            <person name="Okuda H."/>
            <person name="Hiratsuka A."/>
            <person name="Watabe T."/>
        </authorList>
    </citation>
    <scope>PROTEIN SEQUENCE OF 2-21</scope>
    <source>
        <strain>Sprague-Dawley</strain>
        <tissue>Liver</tissue>
    </source>
</reference>
<gene>
    <name evidence="13" type="primary">Sult2a6</name>
    <name type="synonym">Smp2a</name>
    <name type="synonym">St2a2</name>
</gene>
<keyword id="KW-0963">Cytoplasm</keyword>
<keyword id="KW-0903">Direct protein sequencing</keyword>
<keyword id="KW-0443">Lipid metabolism</keyword>
<keyword id="KW-1185">Reference proteome</keyword>
<keyword id="KW-0753">Steroid metabolism</keyword>
<keyword id="KW-0808">Transferase</keyword>
<comment type="function">
    <text evidence="4">Sulfotransferase that utilizes 3'-phospho-5'-adenylyl sulfate (PAPS) as sulfonate donor to catalyze the sulfonation of the hydroxyl group of hydroxysteroids and bile acids (PubMed:2754334). Prefered substrates are dehydroepiandrosterone (DHEA, also known as 3beta-hydroxyandrost-5-en-17-one) and 3beta-hydroxy-5-cholenoate, but can also catalyze deoxycholate and its conjugates, and lithocholate conjugates, in vitro (PubMed:2754334).</text>
</comment>
<comment type="catalytic activity">
    <reaction evidence="3 4">
        <text>an alcohol + 3'-phosphoadenylyl sulfate = an alkyl sulfate + adenosine 3',5'-bisphosphate + H(+)</text>
        <dbReference type="Rhea" id="RHEA:22552"/>
        <dbReference type="ChEBI" id="CHEBI:15378"/>
        <dbReference type="ChEBI" id="CHEBI:30879"/>
        <dbReference type="ChEBI" id="CHEBI:58339"/>
        <dbReference type="ChEBI" id="CHEBI:58343"/>
        <dbReference type="ChEBI" id="CHEBI:83414"/>
        <dbReference type="EC" id="2.8.2.2"/>
    </reaction>
    <physiologicalReaction direction="left-to-right" evidence="12">
        <dbReference type="Rhea" id="RHEA:22553"/>
    </physiologicalReaction>
</comment>
<comment type="catalytic activity">
    <reaction evidence="4">
        <text>glycolithocholate + 3'-phosphoadenylyl sulfate = sulfoglycolithocholate + adenosine 3',5'-bisphosphate + H(+)</text>
        <dbReference type="Rhea" id="RHEA:10908"/>
        <dbReference type="ChEBI" id="CHEBI:15378"/>
        <dbReference type="ChEBI" id="CHEBI:58339"/>
        <dbReference type="ChEBI" id="CHEBI:58343"/>
        <dbReference type="ChEBI" id="CHEBI:60007"/>
        <dbReference type="ChEBI" id="CHEBI:60008"/>
        <dbReference type="EC" id="2.8.2.14"/>
    </reaction>
    <physiologicalReaction direction="left-to-right" evidence="12">
        <dbReference type="Rhea" id="RHEA:10909"/>
    </physiologicalReaction>
</comment>
<comment type="catalytic activity">
    <reaction evidence="4">
        <text>taurolithocholate + 3'-phosphoadenylyl sulfate = taurolithocholate 3-sulfate + adenosine 3',5'-bisphosphate + H(+)</text>
        <dbReference type="Rhea" id="RHEA:14013"/>
        <dbReference type="ChEBI" id="CHEBI:15378"/>
        <dbReference type="ChEBI" id="CHEBI:17179"/>
        <dbReference type="ChEBI" id="CHEBI:58301"/>
        <dbReference type="ChEBI" id="CHEBI:58339"/>
        <dbReference type="ChEBI" id="CHEBI:58343"/>
        <dbReference type="EC" id="2.8.2.14"/>
    </reaction>
    <physiologicalReaction direction="left-to-right" evidence="12">
        <dbReference type="Rhea" id="RHEA:14014"/>
    </physiologicalReaction>
</comment>
<comment type="catalytic activity">
    <reaction evidence="3 4">
        <text>3beta-hydroxyandrost-5-en-17-one + 3'-phosphoadenylyl sulfate = dehydroepiandrosterone 3-sulfate + adenosine 3',5'-bisphosphate + H(+)</text>
        <dbReference type="Rhea" id="RHEA:51216"/>
        <dbReference type="ChEBI" id="CHEBI:15378"/>
        <dbReference type="ChEBI" id="CHEBI:28689"/>
        <dbReference type="ChEBI" id="CHEBI:57905"/>
        <dbReference type="ChEBI" id="CHEBI:58339"/>
        <dbReference type="ChEBI" id="CHEBI:58343"/>
    </reaction>
    <physiologicalReaction direction="left-to-right" evidence="12">
        <dbReference type="Rhea" id="RHEA:51217"/>
    </physiologicalReaction>
</comment>
<comment type="catalytic activity">
    <reaction evidence="4">
        <text>3beta-hydroxy-5-cholenate + 3'-phosphoadenylyl sulfate = 3beta-sulfo-5-cholenate + adenosine 3',5'-bisphosphate + H(+)</text>
        <dbReference type="Rhea" id="RHEA:77199"/>
        <dbReference type="ChEBI" id="CHEBI:15378"/>
        <dbReference type="ChEBI" id="CHEBI:58339"/>
        <dbReference type="ChEBI" id="CHEBI:58343"/>
        <dbReference type="ChEBI" id="CHEBI:195610"/>
        <dbReference type="ChEBI" id="CHEBI:195614"/>
    </reaction>
    <physiologicalReaction direction="left-to-right" evidence="12">
        <dbReference type="Rhea" id="RHEA:77200"/>
    </physiologicalReaction>
</comment>
<comment type="catalytic activity">
    <reaction evidence="4">
        <text>deoxycholate + 3'-phosphoadenylyl sulfate = 3alpha-sulfodeoxycholate + adenosine 3',5'-bisphosphate + H(+)</text>
        <dbReference type="Rhea" id="RHEA:77203"/>
        <dbReference type="ChEBI" id="CHEBI:15378"/>
        <dbReference type="ChEBI" id="CHEBI:23614"/>
        <dbReference type="ChEBI" id="CHEBI:58339"/>
        <dbReference type="ChEBI" id="CHEBI:58343"/>
        <dbReference type="ChEBI" id="CHEBI:195622"/>
    </reaction>
    <physiologicalReaction direction="left-to-right" evidence="12">
        <dbReference type="Rhea" id="RHEA:77204"/>
    </physiologicalReaction>
</comment>
<comment type="catalytic activity">
    <reaction evidence="4">
        <text>glycodeoxycholate + 3'-phosphoadenylyl sulfate = 3alpha-sulfoglycodeoxycholate + adenosine 3',5'-bisphosphate + H(+)</text>
        <dbReference type="Rhea" id="RHEA:77207"/>
        <dbReference type="ChEBI" id="CHEBI:15378"/>
        <dbReference type="ChEBI" id="CHEBI:58339"/>
        <dbReference type="ChEBI" id="CHEBI:58343"/>
        <dbReference type="ChEBI" id="CHEBI:82982"/>
        <dbReference type="ChEBI" id="CHEBI:195624"/>
    </reaction>
    <physiologicalReaction direction="left-to-right" evidence="12">
        <dbReference type="Rhea" id="RHEA:77208"/>
    </physiologicalReaction>
</comment>
<comment type="catalytic activity">
    <reaction evidence="4">
        <text>taurodeoxycholate + 3'-phosphoadenylyl sulfate = 3alpha-sulfotaurodeoxycholate + adenosine 3',5'-bisphosphate + H(+)</text>
        <dbReference type="Rhea" id="RHEA:77211"/>
        <dbReference type="ChEBI" id="CHEBI:15378"/>
        <dbReference type="ChEBI" id="CHEBI:36261"/>
        <dbReference type="ChEBI" id="CHEBI:58339"/>
        <dbReference type="ChEBI" id="CHEBI:58343"/>
        <dbReference type="ChEBI" id="CHEBI:195625"/>
    </reaction>
    <physiologicalReaction direction="left-to-right" evidence="12">
        <dbReference type="Rhea" id="RHEA:77212"/>
    </physiologicalReaction>
</comment>
<comment type="biophysicochemical properties">
    <kinetics>
        <KM evidence="4">43 uM for 3'-phosphoadenylyl sulfate</KM>
        <KM evidence="4">0.72 uM for 3beta-hydroxyandrost-5-en-17-one (DHEA)</KM>
    </kinetics>
    <phDependence>
        <text evidence="4">Optimum pH is 6.5.</text>
    </phDependence>
</comment>
<comment type="subunit">
    <text evidence="5">Oligomer.</text>
</comment>
<comment type="subcellular location">
    <subcellularLocation>
        <location evidence="4">Cytoplasm</location>
        <location evidence="4">Cytosol</location>
    </subcellularLocation>
</comment>
<comment type="tissue specificity">
    <text evidence="5">Liver, exhibiting a sex-dependent spatial localization in the lobule of the liver.</text>
</comment>
<comment type="developmental stage">
    <text evidence="5">There is a marked sex difference (female &gt;&gt; male) in the cytosolic level of this protein. Its activity increases after birth in parallel in both sexes until the weanling stage. Thereafter the activity decreases in males, whereas it declines temporarily in females and increases again to a maximum level in adult females.</text>
</comment>
<comment type="induction">
    <text>The ST activities display gender- and age-dependent alterations and are known to be under the regulation of gonadal, adrenal and growth hormones.</text>
</comment>
<comment type="similarity">
    <text evidence="11">Belongs to the sulfotransferase 1 family.</text>
</comment>
<dbReference type="EC" id="2.8.2.2" evidence="4"/>
<dbReference type="EC" id="2.8.2.14" evidence="4"/>
<dbReference type="EMBL" id="M33329">
    <property type="protein sequence ID" value="AAA42183.1"/>
    <property type="molecule type" value="mRNA"/>
</dbReference>
<dbReference type="EMBL" id="X63410">
    <property type="protein sequence ID" value="CAA45007.1"/>
    <property type="molecule type" value="mRNA"/>
</dbReference>
<dbReference type="EMBL" id="M29301">
    <property type="protein sequence ID" value="AAA42151.1"/>
    <property type="status" value="ALT_TERM"/>
    <property type="molecule type" value="Genomic_DNA"/>
</dbReference>
<dbReference type="PIR" id="I60190">
    <property type="entry name" value="I60190"/>
</dbReference>
<dbReference type="RefSeq" id="NP_036827.3">
    <property type="nucleotide sequence ID" value="NM_012695.3"/>
</dbReference>
<dbReference type="SMR" id="P22789"/>
<dbReference type="FunCoup" id="P22789">
    <property type="interactions" value="5"/>
</dbReference>
<dbReference type="iPTMnet" id="P22789"/>
<dbReference type="PhosphoSitePlus" id="P22789"/>
<dbReference type="GeneID" id="24902"/>
<dbReference type="KEGG" id="rno:24902"/>
<dbReference type="UCSC" id="RGD:3727">
    <property type="organism name" value="rat"/>
</dbReference>
<dbReference type="AGR" id="RGD:3727"/>
<dbReference type="CTD" id="629219"/>
<dbReference type="RGD" id="3727">
    <property type="gene designation" value="Sult2a6"/>
</dbReference>
<dbReference type="InParanoid" id="P22789"/>
<dbReference type="OrthoDB" id="43838at9989"/>
<dbReference type="PhylomeDB" id="P22789"/>
<dbReference type="TreeFam" id="TF321745"/>
<dbReference type="BRENDA" id="2.8.2.2">
    <property type="organism ID" value="5301"/>
</dbReference>
<dbReference type="Reactome" id="R-RNO-156584">
    <property type="pathway name" value="Cytosolic sulfonation of small molecules"/>
</dbReference>
<dbReference type="Reactome" id="R-RNO-9753281">
    <property type="pathway name" value="Paracetamol ADME"/>
</dbReference>
<dbReference type="PRO" id="PR:P22789"/>
<dbReference type="Proteomes" id="UP000002494">
    <property type="component" value="Unplaced"/>
</dbReference>
<dbReference type="GO" id="GO:0005737">
    <property type="term" value="C:cytoplasm"/>
    <property type="evidence" value="ECO:0000318"/>
    <property type="project" value="GO_Central"/>
</dbReference>
<dbReference type="GO" id="GO:0005829">
    <property type="term" value="C:cytosol"/>
    <property type="evidence" value="ECO:0007669"/>
    <property type="project" value="UniProtKB-SubCell"/>
</dbReference>
<dbReference type="GO" id="GO:0004027">
    <property type="term" value="F:alcohol sulfotransferase activity"/>
    <property type="evidence" value="ECO:0007669"/>
    <property type="project" value="UniProtKB-EC"/>
</dbReference>
<dbReference type="GO" id="GO:0047704">
    <property type="term" value="F:bile-salt sulfotransferase activity"/>
    <property type="evidence" value="ECO:0007669"/>
    <property type="project" value="RHEA"/>
</dbReference>
<dbReference type="GO" id="GO:0008202">
    <property type="term" value="P:steroid metabolic process"/>
    <property type="evidence" value="ECO:0007669"/>
    <property type="project" value="UniProtKB-KW"/>
</dbReference>
<dbReference type="GO" id="GO:0051923">
    <property type="term" value="P:sulfation"/>
    <property type="evidence" value="ECO:0000318"/>
    <property type="project" value="GO_Central"/>
</dbReference>
<dbReference type="FunFam" id="3.40.50.300:FF:000433">
    <property type="entry name" value="Estrogen sulfotransferase"/>
    <property type="match status" value="1"/>
</dbReference>
<dbReference type="Gene3D" id="3.40.50.300">
    <property type="entry name" value="P-loop containing nucleotide triphosphate hydrolases"/>
    <property type="match status" value="1"/>
</dbReference>
<dbReference type="InterPro" id="IPR027417">
    <property type="entry name" value="P-loop_NTPase"/>
</dbReference>
<dbReference type="InterPro" id="IPR000863">
    <property type="entry name" value="Sulfotransferase_dom"/>
</dbReference>
<dbReference type="PANTHER" id="PTHR11783">
    <property type="entry name" value="SULFOTRANSFERASE SULT"/>
    <property type="match status" value="1"/>
</dbReference>
<dbReference type="Pfam" id="PF00685">
    <property type="entry name" value="Sulfotransfer_1"/>
    <property type="match status" value="1"/>
</dbReference>
<dbReference type="SUPFAM" id="SSF52540">
    <property type="entry name" value="P-loop containing nucleoside triphosphate hydrolases"/>
    <property type="match status" value="1"/>
</dbReference>